<comment type="function">
    <text evidence="1">Catalyzes the attachment of L-aspartate to tRNA(Asp) in a two-step reaction: L-aspartate is first activated by ATP to form Asp-AMP and then transferred to the acceptor end of tRNA(Asp).</text>
</comment>
<comment type="catalytic activity">
    <reaction evidence="1">
        <text>tRNA(Asp) + L-aspartate + ATP = L-aspartyl-tRNA(Asp) + AMP + diphosphate</text>
        <dbReference type="Rhea" id="RHEA:19649"/>
        <dbReference type="Rhea" id="RHEA-COMP:9660"/>
        <dbReference type="Rhea" id="RHEA-COMP:9678"/>
        <dbReference type="ChEBI" id="CHEBI:29991"/>
        <dbReference type="ChEBI" id="CHEBI:30616"/>
        <dbReference type="ChEBI" id="CHEBI:33019"/>
        <dbReference type="ChEBI" id="CHEBI:78442"/>
        <dbReference type="ChEBI" id="CHEBI:78516"/>
        <dbReference type="ChEBI" id="CHEBI:456215"/>
        <dbReference type="EC" id="6.1.1.12"/>
    </reaction>
</comment>
<comment type="subunit">
    <text evidence="1">Homodimer.</text>
</comment>
<comment type="subcellular location">
    <subcellularLocation>
        <location evidence="1">Cytoplasm</location>
    </subcellularLocation>
</comment>
<comment type="similarity">
    <text evidence="1">Belongs to the class-II aminoacyl-tRNA synthetase family. Type 1 subfamily.</text>
</comment>
<reference key="1">
    <citation type="journal article" date="2011" name="J. Bacteriol.">
        <title>Comparative genomics of 28 Salmonella enterica isolates: evidence for CRISPR-mediated adaptive sublineage evolution.</title>
        <authorList>
            <person name="Fricke W.F."/>
            <person name="Mammel M.K."/>
            <person name="McDermott P.F."/>
            <person name="Tartera C."/>
            <person name="White D.G."/>
            <person name="Leclerc J.E."/>
            <person name="Ravel J."/>
            <person name="Cebula T.A."/>
        </authorList>
    </citation>
    <scope>NUCLEOTIDE SEQUENCE [LARGE SCALE GENOMIC DNA]</scope>
    <source>
        <strain>CVM19633</strain>
    </source>
</reference>
<name>SYD_SALSV</name>
<keyword id="KW-0030">Aminoacyl-tRNA synthetase</keyword>
<keyword id="KW-0067">ATP-binding</keyword>
<keyword id="KW-0963">Cytoplasm</keyword>
<keyword id="KW-0436">Ligase</keyword>
<keyword id="KW-0547">Nucleotide-binding</keyword>
<keyword id="KW-0648">Protein biosynthesis</keyword>
<evidence type="ECO:0000255" key="1">
    <source>
        <dbReference type="HAMAP-Rule" id="MF_00044"/>
    </source>
</evidence>
<dbReference type="EC" id="6.1.1.12" evidence="1"/>
<dbReference type="EMBL" id="CP001127">
    <property type="protein sequence ID" value="ACF90200.1"/>
    <property type="molecule type" value="Genomic_DNA"/>
</dbReference>
<dbReference type="RefSeq" id="WP_001258633.1">
    <property type="nucleotide sequence ID" value="NC_011094.1"/>
</dbReference>
<dbReference type="SMR" id="B4TYS4"/>
<dbReference type="KEGG" id="sew:SeSA_A2055"/>
<dbReference type="HOGENOM" id="CLU_014330_3_2_6"/>
<dbReference type="Proteomes" id="UP000001865">
    <property type="component" value="Chromosome"/>
</dbReference>
<dbReference type="GO" id="GO:0005737">
    <property type="term" value="C:cytoplasm"/>
    <property type="evidence" value="ECO:0007669"/>
    <property type="project" value="UniProtKB-SubCell"/>
</dbReference>
<dbReference type="GO" id="GO:0004815">
    <property type="term" value="F:aspartate-tRNA ligase activity"/>
    <property type="evidence" value="ECO:0007669"/>
    <property type="project" value="UniProtKB-UniRule"/>
</dbReference>
<dbReference type="GO" id="GO:0005524">
    <property type="term" value="F:ATP binding"/>
    <property type="evidence" value="ECO:0007669"/>
    <property type="project" value="UniProtKB-UniRule"/>
</dbReference>
<dbReference type="GO" id="GO:0003676">
    <property type="term" value="F:nucleic acid binding"/>
    <property type="evidence" value="ECO:0007669"/>
    <property type="project" value="InterPro"/>
</dbReference>
<dbReference type="GO" id="GO:0006422">
    <property type="term" value="P:aspartyl-tRNA aminoacylation"/>
    <property type="evidence" value="ECO:0007669"/>
    <property type="project" value="UniProtKB-UniRule"/>
</dbReference>
<dbReference type="CDD" id="cd00777">
    <property type="entry name" value="AspRS_core"/>
    <property type="match status" value="1"/>
</dbReference>
<dbReference type="CDD" id="cd04317">
    <property type="entry name" value="EcAspRS_like_N"/>
    <property type="match status" value="1"/>
</dbReference>
<dbReference type="FunFam" id="2.40.50.140:FF:000080">
    <property type="entry name" value="Aspartate--tRNA ligase"/>
    <property type="match status" value="1"/>
</dbReference>
<dbReference type="FunFam" id="3.30.1360.30:FF:000001">
    <property type="entry name" value="Aspartate--tRNA ligase"/>
    <property type="match status" value="1"/>
</dbReference>
<dbReference type="Gene3D" id="3.30.930.10">
    <property type="entry name" value="Bira Bifunctional Protein, Domain 2"/>
    <property type="match status" value="1"/>
</dbReference>
<dbReference type="Gene3D" id="3.30.1360.30">
    <property type="entry name" value="GAD-like domain"/>
    <property type="match status" value="1"/>
</dbReference>
<dbReference type="Gene3D" id="2.40.50.140">
    <property type="entry name" value="Nucleic acid-binding proteins"/>
    <property type="match status" value="1"/>
</dbReference>
<dbReference type="HAMAP" id="MF_00044">
    <property type="entry name" value="Asp_tRNA_synth_type1"/>
    <property type="match status" value="1"/>
</dbReference>
<dbReference type="InterPro" id="IPR004364">
    <property type="entry name" value="Aa-tRNA-synt_II"/>
</dbReference>
<dbReference type="InterPro" id="IPR006195">
    <property type="entry name" value="aa-tRNA-synth_II"/>
</dbReference>
<dbReference type="InterPro" id="IPR045864">
    <property type="entry name" value="aa-tRNA-synth_II/BPL/LPL"/>
</dbReference>
<dbReference type="InterPro" id="IPR004524">
    <property type="entry name" value="Asp-tRNA-ligase_1"/>
</dbReference>
<dbReference type="InterPro" id="IPR047089">
    <property type="entry name" value="Asp-tRNA-ligase_1_N"/>
</dbReference>
<dbReference type="InterPro" id="IPR002312">
    <property type="entry name" value="Asp/Asn-tRNA-synth_IIb"/>
</dbReference>
<dbReference type="InterPro" id="IPR047090">
    <property type="entry name" value="AspRS_core"/>
</dbReference>
<dbReference type="InterPro" id="IPR004115">
    <property type="entry name" value="GAD-like_sf"/>
</dbReference>
<dbReference type="InterPro" id="IPR029351">
    <property type="entry name" value="GAD_dom"/>
</dbReference>
<dbReference type="InterPro" id="IPR012340">
    <property type="entry name" value="NA-bd_OB-fold"/>
</dbReference>
<dbReference type="InterPro" id="IPR004365">
    <property type="entry name" value="NA-bd_OB_tRNA"/>
</dbReference>
<dbReference type="NCBIfam" id="TIGR00459">
    <property type="entry name" value="aspS_bact"/>
    <property type="match status" value="1"/>
</dbReference>
<dbReference type="NCBIfam" id="NF001750">
    <property type="entry name" value="PRK00476.1"/>
    <property type="match status" value="1"/>
</dbReference>
<dbReference type="PANTHER" id="PTHR22594:SF5">
    <property type="entry name" value="ASPARTATE--TRNA LIGASE, MITOCHONDRIAL"/>
    <property type="match status" value="1"/>
</dbReference>
<dbReference type="PANTHER" id="PTHR22594">
    <property type="entry name" value="ASPARTYL/LYSYL-TRNA SYNTHETASE"/>
    <property type="match status" value="1"/>
</dbReference>
<dbReference type="Pfam" id="PF02938">
    <property type="entry name" value="GAD"/>
    <property type="match status" value="1"/>
</dbReference>
<dbReference type="Pfam" id="PF00152">
    <property type="entry name" value="tRNA-synt_2"/>
    <property type="match status" value="1"/>
</dbReference>
<dbReference type="Pfam" id="PF01336">
    <property type="entry name" value="tRNA_anti-codon"/>
    <property type="match status" value="1"/>
</dbReference>
<dbReference type="PRINTS" id="PR01042">
    <property type="entry name" value="TRNASYNTHASP"/>
</dbReference>
<dbReference type="SUPFAM" id="SSF55681">
    <property type="entry name" value="Class II aaRS and biotin synthetases"/>
    <property type="match status" value="1"/>
</dbReference>
<dbReference type="SUPFAM" id="SSF55261">
    <property type="entry name" value="GAD domain-like"/>
    <property type="match status" value="1"/>
</dbReference>
<dbReference type="SUPFAM" id="SSF50249">
    <property type="entry name" value="Nucleic acid-binding proteins"/>
    <property type="match status" value="1"/>
</dbReference>
<dbReference type="PROSITE" id="PS50862">
    <property type="entry name" value="AA_TRNA_LIGASE_II"/>
    <property type="match status" value="1"/>
</dbReference>
<feature type="chain" id="PRO_1000091042" description="Aspartate--tRNA ligase">
    <location>
        <begin position="1"/>
        <end position="590"/>
    </location>
</feature>
<feature type="region of interest" description="Aspartate" evidence="1">
    <location>
        <begin position="195"/>
        <end position="198"/>
    </location>
</feature>
<feature type="binding site" evidence="1">
    <location>
        <position position="171"/>
    </location>
    <ligand>
        <name>L-aspartate</name>
        <dbReference type="ChEBI" id="CHEBI:29991"/>
    </ligand>
</feature>
<feature type="binding site" evidence="1">
    <location>
        <begin position="217"/>
        <end position="219"/>
    </location>
    <ligand>
        <name>ATP</name>
        <dbReference type="ChEBI" id="CHEBI:30616"/>
    </ligand>
</feature>
<feature type="binding site" evidence="1">
    <location>
        <position position="217"/>
    </location>
    <ligand>
        <name>L-aspartate</name>
        <dbReference type="ChEBI" id="CHEBI:29991"/>
    </ligand>
</feature>
<feature type="binding site" evidence="1">
    <location>
        <position position="226"/>
    </location>
    <ligand>
        <name>ATP</name>
        <dbReference type="ChEBI" id="CHEBI:30616"/>
    </ligand>
</feature>
<feature type="binding site" evidence="1">
    <location>
        <position position="448"/>
    </location>
    <ligand>
        <name>L-aspartate</name>
        <dbReference type="ChEBI" id="CHEBI:29991"/>
    </ligand>
</feature>
<feature type="binding site" evidence="1">
    <location>
        <position position="482"/>
    </location>
    <ligand>
        <name>ATP</name>
        <dbReference type="ChEBI" id="CHEBI:30616"/>
    </ligand>
</feature>
<feature type="binding site" evidence="1">
    <location>
        <position position="489"/>
    </location>
    <ligand>
        <name>L-aspartate</name>
        <dbReference type="ChEBI" id="CHEBI:29991"/>
    </ligand>
</feature>
<feature type="binding site" evidence="1">
    <location>
        <begin position="534"/>
        <end position="537"/>
    </location>
    <ligand>
        <name>ATP</name>
        <dbReference type="ChEBI" id="CHEBI:30616"/>
    </ligand>
</feature>
<protein>
    <recommendedName>
        <fullName evidence="1">Aspartate--tRNA ligase</fullName>
        <ecNumber evidence="1">6.1.1.12</ecNumber>
    </recommendedName>
    <alternativeName>
        <fullName evidence="1">Aspartyl-tRNA synthetase</fullName>
        <shortName evidence="1">AspRS</shortName>
    </alternativeName>
</protein>
<proteinExistence type="inferred from homology"/>
<gene>
    <name evidence="1" type="primary">aspS</name>
    <name type="ordered locus">SeSA_A2055</name>
</gene>
<accession>B4TYS4</accession>
<sequence>MRTEYCGQLRLSHVGQQVTLCGWVNRRRDLGSLIFIDMRDREGIVQVFFDPDRADALKLASELRNEFCIQVTGTVRARDAKNVNADMATGEIEVLASSLTIINRADSLPLDANHVNTEEARLKYRYLDLRRPEMAQRLKTRAKITSLVRRFMDDHGFLDIETPMLTKATPEGARDYLVPSRVHKGKFYALPQSPQLFKQLLMMSGFDRYYQIVKCFRDEDLRADRQPEFTQIDVETSFMTAPQVREVMEALVRHLWLEVKGVDLGDFPVMTFAEAERRYGSDKPDLRNPMELVDVADLLKSVEFAVFAGPANDPKGRVAALRVPGGAQLSRKQIDDYGNFVKIYGAKGLAYIKVNERAKGLDGINSPVAKFLTADIVEAILERTGAQDGDMIFFGADNKKVVADALGALRLKLGKDLSLTDEDKWAPLWVIDFPMFEDDGEGGLTAMHHPFTAPRDMTASELKTAPEEAVANAYDMVINGYEVGGGSVRIHNGEMQQTVFGILGINEQEQREKFGFLLDALKYGTPPHAGLAFGLDRLTMLLTGTDNIRDVIAFPKTTAAACLMTEAPSFANQAALTELGIQVVKKAENN</sequence>
<organism>
    <name type="scientific">Salmonella schwarzengrund (strain CVM19633)</name>
    <dbReference type="NCBI Taxonomy" id="439843"/>
    <lineage>
        <taxon>Bacteria</taxon>
        <taxon>Pseudomonadati</taxon>
        <taxon>Pseudomonadota</taxon>
        <taxon>Gammaproteobacteria</taxon>
        <taxon>Enterobacterales</taxon>
        <taxon>Enterobacteriaceae</taxon>
        <taxon>Salmonella</taxon>
    </lineage>
</organism>